<accession>Q05894</accession>
<organismHost>
    <name type="scientific">Lepidoptera</name>
    <name type="common">butterflies and moths</name>
    <dbReference type="NCBI Taxonomy" id="7088"/>
</organismHost>
<name>SPIN_HAEPV</name>
<reference key="1">
    <citation type="journal article" date="1993" name="J. Gen. Virol.">
        <title>A gene encoding a highly expressed spindle body protein of Heliothis armigera entomopoxvirus.</title>
        <authorList>
            <person name="Dall D."/>
            <person name="Sriskantha A."/>
            <person name="Vera A."/>
            <person name="Lai-Fook J."/>
            <person name="Symonds T."/>
        </authorList>
    </citation>
    <scope>NUCLEOTIDE SEQUENCE [GENOMIC DNA]</scope>
    <scope>PROTEIN SEQUENCE OF 21-31</scope>
</reference>
<proteinExistence type="evidence at protein level"/>
<organism>
    <name type="scientific">Heliothis armigera entomopoxvirus</name>
    <name type="common">HaEPV</name>
    <dbReference type="NCBI Taxonomy" id="10290"/>
    <lineage>
        <taxon>Viruses</taxon>
        <taxon>Varidnaviria</taxon>
        <taxon>Bamfordvirae</taxon>
        <taxon>Nucleocytoviricota</taxon>
        <taxon>Pokkesviricetes</taxon>
        <taxon>Chitovirales</taxon>
        <taxon>Poxviridae</taxon>
        <taxon>Entomopoxvirinae</taxon>
        <taxon>Betaentomopoxvirus</taxon>
    </lineage>
</organism>
<sequence>MNKFYYICIYINILYVCVSGHGYMTFPIARQRRCSVRGGQWWPPNGDGITDTMCRAAYQNVYNKVLNQYNDPQEAATAAQYMFQQDNEYAALAGPDYTNLCNLQQNVVPNNLCAAGADDWDVVPFGDKSGMDLPGNWVPTVIPLDSNHQSSVALELEFCPTAVHDPSYYEVYITNSGFNVHTDNVVWGNLELIFNDTVPLRPKSSTSTCNANPNVYRFTVSIPVRPAQFVLYVRWQRIDPVGEGFYNCVDMAFDYAAGPSEEDVIYPDYEAPGQNAYTCHANRNKYGGNYENTIDEDKYQAQLDESIKSRYDKYSRHKGGKFGQKQCNGNKHHYNKYTKYYNQNYKNNKNY</sequence>
<protein>
    <recommendedName>
        <fullName>Spindolin</fullName>
    </recommendedName>
    <alternativeName>
        <fullName>Fusolin</fullName>
    </alternativeName>
    <alternativeName>
        <fullName>p50</fullName>
    </alternativeName>
</protein>
<evidence type="ECO:0000250" key="1"/>
<evidence type="ECO:0000269" key="2">
    <source>
    </source>
</evidence>
<comment type="function">
    <text>This protein is a spindle body protein.</text>
</comment>
<comment type="subunit">
    <text evidence="1">Homodimer; disulfide-linked.</text>
</comment>
<keyword id="KW-0903">Direct protein sequencing</keyword>
<keyword id="KW-1015">Disulfide bond</keyword>
<keyword id="KW-0732">Signal</keyword>
<dbReference type="EMBL" id="L08077">
    <property type="protein sequence ID" value="AAA92858.1"/>
    <property type="molecule type" value="Genomic_DNA"/>
</dbReference>
<dbReference type="PIR" id="JQ2166">
    <property type="entry name" value="JQ2166"/>
</dbReference>
<dbReference type="SMR" id="Q05894"/>
<dbReference type="CAZy" id="AA10">
    <property type="family name" value="Auxiliary Activities 10"/>
</dbReference>
<dbReference type="Gene3D" id="2.70.50.50">
    <property type="entry name" value="chitin-binding protein cbp21"/>
    <property type="match status" value="1"/>
</dbReference>
<dbReference type="InterPro" id="IPR004302">
    <property type="entry name" value="Cellulose/chitin-bd_N"/>
</dbReference>
<dbReference type="InterPro" id="IPR051024">
    <property type="entry name" value="GlcNAc_Chitin_IntDeg"/>
</dbReference>
<dbReference type="InterPro" id="IPR014756">
    <property type="entry name" value="Ig_E-set"/>
</dbReference>
<dbReference type="PANTHER" id="PTHR34823:SF1">
    <property type="entry name" value="CHITIN-BINDING TYPE-4 DOMAIN-CONTAINING PROTEIN"/>
    <property type="match status" value="1"/>
</dbReference>
<dbReference type="PANTHER" id="PTHR34823">
    <property type="entry name" value="GLCNAC-BINDING PROTEIN A"/>
    <property type="match status" value="1"/>
</dbReference>
<dbReference type="Pfam" id="PF03067">
    <property type="entry name" value="LPMO_10"/>
    <property type="match status" value="1"/>
</dbReference>
<dbReference type="SUPFAM" id="SSF81296">
    <property type="entry name" value="E set domains"/>
    <property type="match status" value="1"/>
</dbReference>
<feature type="signal peptide" evidence="2">
    <location>
        <begin position="1"/>
        <end position="20"/>
    </location>
</feature>
<feature type="chain" id="PRO_0000040619" description="Spindolin">
    <location>
        <begin position="21"/>
        <end position="351"/>
    </location>
</feature>